<accession>C5BLU3</accession>
<reference key="1">
    <citation type="journal article" date="2009" name="PLoS ONE">
        <title>The complete genome of Teredinibacter turnerae T7901: an intracellular endosymbiont of marine wood-boring bivalves (shipworms).</title>
        <authorList>
            <person name="Yang J.C."/>
            <person name="Madupu R."/>
            <person name="Durkin A.S."/>
            <person name="Ekborg N.A."/>
            <person name="Pedamallu C.S."/>
            <person name="Hostetler J.B."/>
            <person name="Radune D."/>
            <person name="Toms B.S."/>
            <person name="Henrissat B."/>
            <person name="Coutinho P.M."/>
            <person name="Schwarz S."/>
            <person name="Field L."/>
            <person name="Trindade-Silva A.E."/>
            <person name="Soares C.A.G."/>
            <person name="Elshahawi S."/>
            <person name="Hanora A."/>
            <person name="Schmidt E.W."/>
            <person name="Haygood M.G."/>
            <person name="Posfai J."/>
            <person name="Benner J."/>
            <person name="Madinger C."/>
            <person name="Nove J."/>
            <person name="Anton B."/>
            <person name="Chaudhary K."/>
            <person name="Foster J."/>
            <person name="Holman A."/>
            <person name="Kumar S."/>
            <person name="Lessard P.A."/>
            <person name="Luyten Y.A."/>
            <person name="Slatko B."/>
            <person name="Wood N."/>
            <person name="Wu B."/>
            <person name="Teplitski M."/>
            <person name="Mougous J.D."/>
            <person name="Ward N."/>
            <person name="Eisen J.A."/>
            <person name="Badger J.H."/>
            <person name="Distel D.L."/>
        </authorList>
    </citation>
    <scope>NUCLEOTIDE SEQUENCE [LARGE SCALE GENOMIC DNA]</scope>
    <source>
        <strain>ATCC 39867 / T7901</strain>
    </source>
</reference>
<protein>
    <recommendedName>
        <fullName evidence="1">GMP synthase [glutamine-hydrolyzing]</fullName>
        <ecNumber evidence="1">6.3.5.2</ecNumber>
    </recommendedName>
    <alternativeName>
        <fullName evidence="1">GMP synthetase</fullName>
    </alternativeName>
    <alternativeName>
        <fullName evidence="1">Glutamine amidotransferase</fullName>
    </alternativeName>
</protein>
<evidence type="ECO:0000255" key="1">
    <source>
        <dbReference type="HAMAP-Rule" id="MF_00344"/>
    </source>
</evidence>
<feature type="chain" id="PRO_1000205311" description="GMP synthase [glutamine-hydrolyzing]">
    <location>
        <begin position="1"/>
        <end position="525"/>
    </location>
</feature>
<feature type="domain" description="Glutamine amidotransferase type-1" evidence="1">
    <location>
        <begin position="9"/>
        <end position="207"/>
    </location>
</feature>
<feature type="domain" description="GMPS ATP-PPase" evidence="1">
    <location>
        <begin position="208"/>
        <end position="400"/>
    </location>
</feature>
<feature type="active site" description="Nucleophile" evidence="1">
    <location>
        <position position="86"/>
    </location>
</feature>
<feature type="active site" evidence="1">
    <location>
        <position position="181"/>
    </location>
</feature>
<feature type="active site" evidence="1">
    <location>
        <position position="183"/>
    </location>
</feature>
<feature type="binding site" evidence="1">
    <location>
        <begin position="235"/>
        <end position="241"/>
    </location>
    <ligand>
        <name>ATP</name>
        <dbReference type="ChEBI" id="CHEBI:30616"/>
    </ligand>
</feature>
<gene>
    <name evidence="1" type="primary">guaA</name>
    <name type="ordered locus">TERTU_2615</name>
</gene>
<keyword id="KW-0067">ATP-binding</keyword>
<keyword id="KW-0315">Glutamine amidotransferase</keyword>
<keyword id="KW-0332">GMP biosynthesis</keyword>
<keyword id="KW-0436">Ligase</keyword>
<keyword id="KW-0547">Nucleotide-binding</keyword>
<keyword id="KW-0658">Purine biosynthesis</keyword>
<keyword id="KW-1185">Reference proteome</keyword>
<name>GUAA_TERTT</name>
<dbReference type="EC" id="6.3.5.2" evidence="1"/>
<dbReference type="EMBL" id="CP001614">
    <property type="protein sequence ID" value="ACR14338.1"/>
    <property type="molecule type" value="Genomic_DNA"/>
</dbReference>
<dbReference type="RefSeq" id="WP_015820453.1">
    <property type="nucleotide sequence ID" value="NC_012997.1"/>
</dbReference>
<dbReference type="SMR" id="C5BLU3"/>
<dbReference type="STRING" id="377629.TERTU_2615"/>
<dbReference type="KEGG" id="ttu:TERTU_2615"/>
<dbReference type="eggNOG" id="COG0518">
    <property type="taxonomic scope" value="Bacteria"/>
</dbReference>
<dbReference type="eggNOG" id="COG0519">
    <property type="taxonomic scope" value="Bacteria"/>
</dbReference>
<dbReference type="HOGENOM" id="CLU_014340_0_5_6"/>
<dbReference type="OrthoDB" id="9802219at2"/>
<dbReference type="UniPathway" id="UPA00189">
    <property type="reaction ID" value="UER00296"/>
</dbReference>
<dbReference type="Proteomes" id="UP000009080">
    <property type="component" value="Chromosome"/>
</dbReference>
<dbReference type="GO" id="GO:0005829">
    <property type="term" value="C:cytosol"/>
    <property type="evidence" value="ECO:0007669"/>
    <property type="project" value="TreeGrafter"/>
</dbReference>
<dbReference type="GO" id="GO:0005524">
    <property type="term" value="F:ATP binding"/>
    <property type="evidence" value="ECO:0007669"/>
    <property type="project" value="UniProtKB-UniRule"/>
</dbReference>
<dbReference type="GO" id="GO:0003921">
    <property type="term" value="F:GMP synthase activity"/>
    <property type="evidence" value="ECO:0007669"/>
    <property type="project" value="InterPro"/>
</dbReference>
<dbReference type="CDD" id="cd01742">
    <property type="entry name" value="GATase1_GMP_Synthase"/>
    <property type="match status" value="1"/>
</dbReference>
<dbReference type="CDD" id="cd01997">
    <property type="entry name" value="GMP_synthase_C"/>
    <property type="match status" value="1"/>
</dbReference>
<dbReference type="FunFam" id="3.30.300.10:FF:000002">
    <property type="entry name" value="GMP synthase [glutamine-hydrolyzing]"/>
    <property type="match status" value="1"/>
</dbReference>
<dbReference type="FunFam" id="3.40.50.620:FF:000001">
    <property type="entry name" value="GMP synthase [glutamine-hydrolyzing]"/>
    <property type="match status" value="1"/>
</dbReference>
<dbReference type="FunFam" id="3.40.50.880:FF:000001">
    <property type="entry name" value="GMP synthase [glutamine-hydrolyzing]"/>
    <property type="match status" value="1"/>
</dbReference>
<dbReference type="Gene3D" id="3.30.300.10">
    <property type="match status" value="1"/>
</dbReference>
<dbReference type="Gene3D" id="3.40.50.880">
    <property type="match status" value="1"/>
</dbReference>
<dbReference type="Gene3D" id="3.40.50.620">
    <property type="entry name" value="HUPs"/>
    <property type="match status" value="1"/>
</dbReference>
<dbReference type="HAMAP" id="MF_00344">
    <property type="entry name" value="GMP_synthase"/>
    <property type="match status" value="1"/>
</dbReference>
<dbReference type="InterPro" id="IPR029062">
    <property type="entry name" value="Class_I_gatase-like"/>
</dbReference>
<dbReference type="InterPro" id="IPR017926">
    <property type="entry name" value="GATASE"/>
</dbReference>
<dbReference type="InterPro" id="IPR001674">
    <property type="entry name" value="GMP_synth_C"/>
</dbReference>
<dbReference type="InterPro" id="IPR004739">
    <property type="entry name" value="GMP_synth_GATase"/>
</dbReference>
<dbReference type="InterPro" id="IPR022955">
    <property type="entry name" value="GMP_synthase"/>
</dbReference>
<dbReference type="InterPro" id="IPR025777">
    <property type="entry name" value="GMPS_ATP_PPase_dom"/>
</dbReference>
<dbReference type="InterPro" id="IPR022310">
    <property type="entry name" value="NAD/GMP_synthase"/>
</dbReference>
<dbReference type="InterPro" id="IPR014729">
    <property type="entry name" value="Rossmann-like_a/b/a_fold"/>
</dbReference>
<dbReference type="NCBIfam" id="TIGR00884">
    <property type="entry name" value="guaA_Cterm"/>
    <property type="match status" value="1"/>
</dbReference>
<dbReference type="NCBIfam" id="TIGR00888">
    <property type="entry name" value="guaA_Nterm"/>
    <property type="match status" value="1"/>
</dbReference>
<dbReference type="NCBIfam" id="NF000848">
    <property type="entry name" value="PRK00074.1"/>
    <property type="match status" value="1"/>
</dbReference>
<dbReference type="PANTHER" id="PTHR11922:SF2">
    <property type="entry name" value="GMP SYNTHASE [GLUTAMINE-HYDROLYZING]"/>
    <property type="match status" value="1"/>
</dbReference>
<dbReference type="PANTHER" id="PTHR11922">
    <property type="entry name" value="GMP SYNTHASE-RELATED"/>
    <property type="match status" value="1"/>
</dbReference>
<dbReference type="Pfam" id="PF00117">
    <property type="entry name" value="GATase"/>
    <property type="match status" value="1"/>
</dbReference>
<dbReference type="Pfam" id="PF00958">
    <property type="entry name" value="GMP_synt_C"/>
    <property type="match status" value="1"/>
</dbReference>
<dbReference type="Pfam" id="PF02540">
    <property type="entry name" value="NAD_synthase"/>
    <property type="match status" value="1"/>
</dbReference>
<dbReference type="PRINTS" id="PR00097">
    <property type="entry name" value="ANTSNTHASEII"/>
</dbReference>
<dbReference type="PRINTS" id="PR00096">
    <property type="entry name" value="GATASE"/>
</dbReference>
<dbReference type="SUPFAM" id="SSF52402">
    <property type="entry name" value="Adenine nucleotide alpha hydrolases-like"/>
    <property type="match status" value="1"/>
</dbReference>
<dbReference type="SUPFAM" id="SSF52317">
    <property type="entry name" value="Class I glutamine amidotransferase-like"/>
    <property type="match status" value="1"/>
</dbReference>
<dbReference type="SUPFAM" id="SSF54810">
    <property type="entry name" value="GMP synthetase C-terminal dimerisation domain"/>
    <property type="match status" value="1"/>
</dbReference>
<dbReference type="PROSITE" id="PS51273">
    <property type="entry name" value="GATASE_TYPE_1"/>
    <property type="match status" value="1"/>
</dbReference>
<dbReference type="PROSITE" id="PS51553">
    <property type="entry name" value="GMPS_ATP_PPASE"/>
    <property type="match status" value="1"/>
</dbReference>
<organism>
    <name type="scientific">Teredinibacter turnerae (strain ATCC 39867 / T7901)</name>
    <dbReference type="NCBI Taxonomy" id="377629"/>
    <lineage>
        <taxon>Bacteria</taxon>
        <taxon>Pseudomonadati</taxon>
        <taxon>Pseudomonadota</taxon>
        <taxon>Gammaproteobacteria</taxon>
        <taxon>Cellvibrionales</taxon>
        <taxon>Cellvibrionaceae</taxon>
        <taxon>Teredinibacter</taxon>
    </lineage>
</organism>
<sequence>MTQNIHSQRVLILDFGSQYTQLIARRIREVGVFSEIRAFDMTDEEIREYNPKAIILSGGPESVTAGASPRAPEAVFELGVPVLGICYGMQTMAEQLGGRVQSSEVREFGYAQVRVAGESALFRDIKDHVDSDGGALLDVWMSHGDKVIAMPDTFSLLASTPSCPIAGMSWEEKRFYGVQFHPEVTHTLQGKRIFEHFVLEIAGCEPLWTPANIVEDAIERVREKVGSDKVLLGLSGGVDSSVVAALLHRAIGDQLTCVFVDNGLLRKQEGDQVMDMFAKNMGVKVVRADAEDLFLSKLHGINDPEQKRKIIGNTFIEVFDTEAAKLQNVKWLAQGTIYPDVIESAASKTGKAHVIKSHHNVGGLPEDMQFELVEPLRELFKDEVRKIGLELGLPYDMVYRHPFPGPGLGVRILGEVKKEYADILREADAIFIEELRNADWYHKTSQAFAVFLPVKSVGVVGDARRYEWVISLRAVETVDFMTARWAHLPYDLLEKVSNRIINEISGVSRVAYDVSSKPPATIEWE</sequence>
<proteinExistence type="inferred from homology"/>
<comment type="function">
    <text evidence="1">Catalyzes the synthesis of GMP from XMP.</text>
</comment>
<comment type="catalytic activity">
    <reaction evidence="1">
        <text>XMP + L-glutamine + ATP + H2O = GMP + L-glutamate + AMP + diphosphate + 2 H(+)</text>
        <dbReference type="Rhea" id="RHEA:11680"/>
        <dbReference type="ChEBI" id="CHEBI:15377"/>
        <dbReference type="ChEBI" id="CHEBI:15378"/>
        <dbReference type="ChEBI" id="CHEBI:29985"/>
        <dbReference type="ChEBI" id="CHEBI:30616"/>
        <dbReference type="ChEBI" id="CHEBI:33019"/>
        <dbReference type="ChEBI" id="CHEBI:57464"/>
        <dbReference type="ChEBI" id="CHEBI:58115"/>
        <dbReference type="ChEBI" id="CHEBI:58359"/>
        <dbReference type="ChEBI" id="CHEBI:456215"/>
        <dbReference type="EC" id="6.3.5.2"/>
    </reaction>
</comment>
<comment type="pathway">
    <text evidence="1">Purine metabolism; GMP biosynthesis; GMP from XMP (L-Gln route): step 1/1.</text>
</comment>
<comment type="subunit">
    <text evidence="1">Homodimer.</text>
</comment>